<feature type="chain" id="PRO_0000365714" description="Single-pass membrane and coiled-coil domain-containing protein 4 homolog">
    <location>
        <begin position="1"/>
        <end position="56"/>
    </location>
</feature>
<feature type="transmembrane region" description="Helical" evidence="1">
    <location>
        <begin position="30"/>
        <end position="50"/>
    </location>
</feature>
<feature type="region of interest" description="Disordered" evidence="2">
    <location>
        <begin position="1"/>
        <end position="27"/>
    </location>
</feature>
<feature type="coiled-coil region" evidence="1">
    <location>
        <begin position="9"/>
        <end position="31"/>
    </location>
</feature>
<name>SMC4A_NEMVE</name>
<keyword id="KW-0175">Coiled coil</keyword>
<keyword id="KW-0472">Membrane</keyword>
<keyword id="KW-1185">Reference proteome</keyword>
<keyword id="KW-0812">Transmembrane</keyword>
<keyword id="KW-1133">Transmembrane helix</keyword>
<reference key="1">
    <citation type="journal article" date="2007" name="Science">
        <title>Sea anemone genome reveals ancestral eumetazoan gene repertoire and genomic organization.</title>
        <authorList>
            <person name="Putnam N.H."/>
            <person name="Srivastava M."/>
            <person name="Hellsten U."/>
            <person name="Dirks B."/>
            <person name="Chapman J."/>
            <person name="Salamov A."/>
            <person name="Terry A."/>
            <person name="Shapiro H."/>
            <person name="Lindquist E."/>
            <person name="Kapitonov V.V."/>
            <person name="Jurka J."/>
            <person name="Genikhovich G."/>
            <person name="Grigoriev I.V."/>
            <person name="Lucas S.M."/>
            <person name="Steele R.E."/>
            <person name="Finnerty J.R."/>
            <person name="Technau U."/>
            <person name="Martindale M.Q."/>
            <person name="Rokhsar D.S."/>
        </authorList>
    </citation>
    <scope>NUCLEOTIDE SEQUENCE [LARGE SCALE GENOMIC DNA]</scope>
    <source>
        <strain>CH2 X CH6</strain>
    </source>
</reference>
<evidence type="ECO:0000255" key="1"/>
<evidence type="ECO:0000256" key="2">
    <source>
        <dbReference type="SAM" id="MobiDB-lite"/>
    </source>
</evidence>
<evidence type="ECO:0000305" key="3"/>
<gene>
    <name type="ORF">v1g97730</name>
</gene>
<sequence>MRQLPGKAAKETRKMKRERKQQNKEGHNRVVTVAIPVCLAVFVMLIVYVYSATSKH</sequence>
<accession>A7RYM6</accession>
<dbReference type="EMBL" id="DS469553">
    <property type="protein sequence ID" value="EDO43547.1"/>
    <property type="molecule type" value="Genomic_DNA"/>
</dbReference>
<dbReference type="RefSeq" id="XP_001635610.1">
    <property type="nucleotide sequence ID" value="XM_001635560.1"/>
</dbReference>
<dbReference type="SMR" id="A7RYM6"/>
<dbReference type="FunCoup" id="A7RYM6">
    <property type="interactions" value="45"/>
</dbReference>
<dbReference type="EnsemblMetazoa" id="EDO43547">
    <property type="protein sequence ID" value="EDO43547"/>
    <property type="gene ID" value="NEMVEDRAFT_v1g97730"/>
</dbReference>
<dbReference type="HOGENOM" id="CLU_209950_1_0_1"/>
<dbReference type="InParanoid" id="A7RYM6"/>
<dbReference type="PhylomeDB" id="A7RYM6"/>
<dbReference type="Proteomes" id="UP000001593">
    <property type="component" value="Unassembled WGS sequence"/>
</dbReference>
<dbReference type="GO" id="GO:0016020">
    <property type="term" value="C:membrane"/>
    <property type="evidence" value="ECO:0007669"/>
    <property type="project" value="UniProtKB-SubCell"/>
</dbReference>
<dbReference type="InterPro" id="IPR027960">
    <property type="entry name" value="DUF4519"/>
</dbReference>
<dbReference type="PANTHER" id="PTHR34644">
    <property type="entry name" value="SINGLE-PASS MEMBRANE AND COILED-COIL DOMAIN-CONTAINING PROTEIN 4"/>
    <property type="match status" value="1"/>
</dbReference>
<dbReference type="PANTHER" id="PTHR34644:SF2">
    <property type="entry name" value="SINGLE-PASS MEMBRANE AND COILED-COIL DOMAIN-CONTAINING PROTEIN 4"/>
    <property type="match status" value="1"/>
</dbReference>
<dbReference type="Pfam" id="PF15012">
    <property type="entry name" value="DUF4519"/>
    <property type="match status" value="1"/>
</dbReference>
<proteinExistence type="inferred from homology"/>
<protein>
    <recommendedName>
        <fullName>Single-pass membrane and coiled-coil domain-containing protein 4 homolog</fullName>
    </recommendedName>
</protein>
<comment type="subcellular location">
    <subcellularLocation>
        <location evidence="3">Membrane</location>
        <topology evidence="3">Single-pass membrane protein</topology>
    </subcellularLocation>
</comment>
<comment type="similarity">
    <text evidence="3">Belongs to the SMCO4 family.</text>
</comment>
<organism>
    <name type="scientific">Nematostella vectensis</name>
    <name type="common">Starlet sea anemone</name>
    <dbReference type="NCBI Taxonomy" id="45351"/>
    <lineage>
        <taxon>Eukaryota</taxon>
        <taxon>Metazoa</taxon>
        <taxon>Cnidaria</taxon>
        <taxon>Anthozoa</taxon>
        <taxon>Hexacorallia</taxon>
        <taxon>Actiniaria</taxon>
        <taxon>Edwardsiidae</taxon>
        <taxon>Nematostella</taxon>
    </lineage>
</organism>